<feature type="chain" id="PRO_0000186867" description="Uncharacterized protein aq_539">
    <location>
        <begin position="1"/>
        <end position="285"/>
    </location>
</feature>
<feature type="transmembrane region" description="Helical" evidence="1">
    <location>
        <begin position="7"/>
        <end position="29"/>
    </location>
</feature>
<feature type="transmembrane region" description="Helical" evidence="1">
    <location>
        <begin position="49"/>
        <end position="71"/>
    </location>
</feature>
<feature type="transmembrane region" description="Helical" evidence="1">
    <location>
        <begin position="95"/>
        <end position="117"/>
    </location>
</feature>
<feature type="transmembrane region" description="Helical" evidence="1">
    <location>
        <begin position="137"/>
        <end position="156"/>
    </location>
</feature>
<feature type="transmembrane region" description="Helical" evidence="1">
    <location>
        <begin position="232"/>
        <end position="254"/>
    </location>
</feature>
<feature type="transmembrane region" description="Helical" evidence="1">
    <location>
        <begin position="259"/>
        <end position="281"/>
    </location>
</feature>
<protein>
    <recommendedName>
        <fullName>Uncharacterized protein aq_539</fullName>
    </recommendedName>
</protein>
<keyword id="KW-1003">Cell membrane</keyword>
<keyword id="KW-0472">Membrane</keyword>
<keyword id="KW-1185">Reference proteome</keyword>
<keyword id="KW-0812">Transmembrane</keyword>
<keyword id="KW-1133">Transmembrane helix</keyword>
<gene>
    <name type="ordered locus">aq_539</name>
</gene>
<proteinExistence type="predicted"/>
<organism>
    <name type="scientific">Aquifex aeolicus (strain VF5)</name>
    <dbReference type="NCBI Taxonomy" id="224324"/>
    <lineage>
        <taxon>Bacteria</taxon>
        <taxon>Pseudomonadati</taxon>
        <taxon>Aquificota</taxon>
        <taxon>Aquificia</taxon>
        <taxon>Aquificales</taxon>
        <taxon>Aquificaceae</taxon>
        <taxon>Aquifex</taxon>
    </lineage>
</organism>
<accession>O66818</accession>
<evidence type="ECO:0000255" key="1"/>
<evidence type="ECO:0000305" key="2"/>
<sequence>MLRAYIFYRLVKNTLLTAFILSLILLTLQLTRLSNVLFGIPFKDFMGFLVVWNAYYTYFFIPEGVILSTFFLMKHFKDKKLLHVFYSFRISDFRIFLYCSIPFLTFFLISALLSNTLLEEKVAFTRKNMLFKLQEKFFSEVPAGTFVSFGAVVLHAEKREGNTLKEAFFKFGDITVLSEYLKYKGNGVFEFRRGTVITEEENYFVVKFNEYTLNLKQFQKKKLREKRLKESKVVNYVNVATLPLFFFLSFTVALKFCHGGLSYYAFASLFIVVHQLIIFVVKLML</sequence>
<dbReference type="EMBL" id="AE000657">
    <property type="protein sequence ID" value="AAC06778.1"/>
    <property type="molecule type" value="Genomic_DNA"/>
</dbReference>
<dbReference type="PIR" id="F70348">
    <property type="entry name" value="F70348"/>
</dbReference>
<dbReference type="RefSeq" id="NP_213378.1">
    <property type="nucleotide sequence ID" value="NC_000918.1"/>
</dbReference>
<dbReference type="RefSeq" id="WP_010880316.1">
    <property type="nucleotide sequence ID" value="NC_000918.1"/>
</dbReference>
<dbReference type="SMR" id="O66818"/>
<dbReference type="STRING" id="224324.aq_539"/>
<dbReference type="EnsemblBacteria" id="AAC06778">
    <property type="protein sequence ID" value="AAC06778"/>
    <property type="gene ID" value="aq_539"/>
</dbReference>
<dbReference type="KEGG" id="aae:aq_539"/>
<dbReference type="eggNOG" id="COG0795">
    <property type="taxonomic scope" value="Bacteria"/>
</dbReference>
<dbReference type="HOGENOM" id="CLU_975373_0_0_0"/>
<dbReference type="InParanoid" id="O66818"/>
<dbReference type="OrthoDB" id="11987at2"/>
<dbReference type="Proteomes" id="UP000000798">
    <property type="component" value="Chromosome"/>
</dbReference>
<dbReference type="GO" id="GO:0005886">
    <property type="term" value="C:plasma membrane"/>
    <property type="evidence" value="ECO:0007669"/>
    <property type="project" value="UniProtKB-SubCell"/>
</dbReference>
<dbReference type="InterPro" id="IPR005495">
    <property type="entry name" value="LptG/LptF_permease"/>
</dbReference>
<dbReference type="Pfam" id="PF03739">
    <property type="entry name" value="LptF_LptG"/>
    <property type="match status" value="1"/>
</dbReference>
<name>Y539_AQUAE</name>
<comment type="subcellular location">
    <subcellularLocation>
        <location evidence="2">Cell membrane</location>
        <topology evidence="2">Multi-pass membrane protein</topology>
    </subcellularLocation>
</comment>
<reference key="1">
    <citation type="journal article" date="1998" name="Nature">
        <title>The complete genome of the hyperthermophilic bacterium Aquifex aeolicus.</title>
        <authorList>
            <person name="Deckert G."/>
            <person name="Warren P.V."/>
            <person name="Gaasterland T."/>
            <person name="Young W.G."/>
            <person name="Lenox A.L."/>
            <person name="Graham D.E."/>
            <person name="Overbeek R."/>
            <person name="Snead M.A."/>
            <person name="Keller M."/>
            <person name="Aujay M."/>
            <person name="Huber R."/>
            <person name="Feldman R.A."/>
            <person name="Short J.M."/>
            <person name="Olsen G.J."/>
            <person name="Swanson R.V."/>
        </authorList>
    </citation>
    <scope>NUCLEOTIDE SEQUENCE [LARGE SCALE GENOMIC DNA]</scope>
    <source>
        <strain>VF5</strain>
    </source>
</reference>